<proteinExistence type="evidence at protein level"/>
<protein>
    <recommendedName>
        <fullName evidence="16">RxLR effector protein Avr3a</fullName>
    </recommendedName>
    <alternativeName>
        <fullName evidence="15">Avirulence protein 3a</fullName>
    </alternativeName>
</protein>
<sequence>MRLAIMLSATAVAINFATSSAIDQTKVLVYGTPAHYIHDSAGRRLLRKNEENEETSEERAPNFNLANLNEEMFNVAALTERADAKKLAKQLMGNDKLADAAYMWWQHNRVTLDQIDTFLKLASRKTQGAKYNQIYNSYMMHLGLTGY</sequence>
<dbReference type="EMBL" id="GU258052">
    <property type="protein sequence ID" value="ADC96691.1"/>
    <property type="molecule type" value="Genomic_DNA"/>
</dbReference>
<dbReference type="EMBL" id="HQ639930">
    <property type="protein sequence ID" value="AEH27535.1"/>
    <property type="molecule type" value="Genomic_DNA"/>
</dbReference>
<dbReference type="EMBL" id="JN849402">
    <property type="protein sequence ID" value="AFQ32411.1"/>
    <property type="molecule type" value="Genomic_DNA"/>
</dbReference>
<dbReference type="EMBL" id="JN849403">
    <property type="protein sequence ID" value="AFQ32412.1"/>
    <property type="molecule type" value="Genomic_DNA"/>
</dbReference>
<dbReference type="EMBL" id="JN849404">
    <property type="protein sequence ID" value="AFQ32413.1"/>
    <property type="molecule type" value="Genomic_DNA"/>
</dbReference>
<dbReference type="EMBL" id="JN849405">
    <property type="protein sequence ID" value="AFQ32414.1"/>
    <property type="molecule type" value="Genomic_DNA"/>
</dbReference>
<dbReference type="EMBL" id="JN849406">
    <property type="protein sequence ID" value="AFQ32415.1"/>
    <property type="molecule type" value="Genomic_DNA"/>
</dbReference>
<dbReference type="EMBL" id="JN849407">
    <property type="protein sequence ID" value="AFQ32416.1"/>
    <property type="molecule type" value="Genomic_DNA"/>
</dbReference>
<dbReference type="EMBL" id="KF154421">
    <property type="protein sequence ID" value="AGV54925.1"/>
    <property type="molecule type" value="Genomic_DNA"/>
</dbReference>
<dbReference type="EMBL" id="KF154423">
    <property type="protein sequence ID" value="AGV54927.1"/>
    <property type="molecule type" value="Genomic_DNA"/>
</dbReference>
<dbReference type="EMBL" id="KF154424">
    <property type="protein sequence ID" value="AGV54928.1"/>
    <property type="molecule type" value="Genomic_DNA"/>
</dbReference>
<dbReference type="EMBL" id="KF154429">
    <property type="protein sequence ID" value="AGV54933.1"/>
    <property type="molecule type" value="Genomic_DNA"/>
</dbReference>
<dbReference type="EMBL" id="KF154430">
    <property type="protein sequence ID" value="AGV54934.1"/>
    <property type="molecule type" value="Genomic_DNA"/>
</dbReference>
<dbReference type="EMBL" id="KP317569">
    <property type="protein sequence ID" value="AKH40250.1"/>
    <property type="molecule type" value="Genomic_DNA"/>
</dbReference>
<dbReference type="EMBL" id="KP317575">
    <property type="protein sequence ID" value="AKH40255.1"/>
    <property type="molecule type" value="Genomic_DNA"/>
</dbReference>
<dbReference type="EMBL" id="KP317576">
    <property type="protein sequence ID" value="AKH40256.1"/>
    <property type="molecule type" value="Genomic_DNA"/>
</dbReference>
<dbReference type="EMBL" id="KP317585">
    <property type="protein sequence ID" value="AKH40263.1"/>
    <property type="molecule type" value="Genomic_DNA"/>
</dbReference>
<dbReference type="EMBL" id="MH043151">
    <property type="protein sequence ID" value="AXU25232.1"/>
    <property type="molecule type" value="Genomic_DNA"/>
</dbReference>
<dbReference type="EMBL" id="MH043159">
    <property type="protein sequence ID" value="AXU25240.1"/>
    <property type="molecule type" value="Genomic_DNA"/>
</dbReference>
<dbReference type="EMBL" id="MH043178">
    <property type="protein sequence ID" value="AXU25259.1"/>
    <property type="molecule type" value="Genomic_DNA"/>
</dbReference>
<dbReference type="EMBL" id="MH043185">
    <property type="protein sequence ID" value="AXU25266.1"/>
    <property type="molecule type" value="Genomic_DNA"/>
</dbReference>
<dbReference type="EMBL" id="MG976602">
    <property type="protein sequence ID" value="AYP64705.1"/>
    <property type="molecule type" value="Genomic_DNA"/>
</dbReference>
<dbReference type="EMBL" id="MG976603">
    <property type="protein sequence ID" value="AYP64706.1"/>
    <property type="molecule type" value="Genomic_DNA"/>
</dbReference>
<dbReference type="EMBL" id="MG976604">
    <property type="protein sequence ID" value="AYP64707.1"/>
    <property type="molecule type" value="Genomic_DNA"/>
</dbReference>
<dbReference type="EMBL" id="AJ893356">
    <property type="protein sequence ID" value="CAI72254.1"/>
    <property type="molecule type" value="Genomic_DNA"/>
</dbReference>
<dbReference type="EMBL" id="AJ893357">
    <property type="protein sequence ID" value="CAI72345.1"/>
    <property type="molecule type" value="Genomic_DNA"/>
</dbReference>
<dbReference type="BMRB" id="Q572D3"/>
<dbReference type="SMR" id="Q572D3"/>
<dbReference type="iPTMnet" id="Q572D3"/>
<dbReference type="VEuPathDB" id="FungiDB:PITG_14371"/>
<dbReference type="OMA" id="VMNDSPK"/>
<dbReference type="PHI-base" id="PHI:473"/>
<dbReference type="PHI-base" id="PHI:4958"/>
<dbReference type="PHI-base" id="PHI:6374"/>
<dbReference type="GO" id="GO:0005576">
    <property type="term" value="C:extracellular region"/>
    <property type="evidence" value="ECO:0007669"/>
    <property type="project" value="UniProtKB-SubCell"/>
</dbReference>
<dbReference type="GO" id="GO:0030430">
    <property type="term" value="C:host cell cytoplasm"/>
    <property type="evidence" value="ECO:0007669"/>
    <property type="project" value="UniProtKB-SubCell"/>
</dbReference>
<dbReference type="GO" id="GO:0080185">
    <property type="term" value="P:effector-mediated activation of plant hypersensitive response by symbiont"/>
    <property type="evidence" value="ECO:0000314"/>
    <property type="project" value="GO_Central"/>
</dbReference>
<dbReference type="Gene3D" id="1.10.10.2460">
    <property type="match status" value="1"/>
</dbReference>
<dbReference type="InterPro" id="IPR031825">
    <property type="entry name" value="RXLR"/>
</dbReference>
<dbReference type="Pfam" id="PF16810">
    <property type="entry name" value="RXLR"/>
    <property type="match status" value="1"/>
</dbReference>
<comment type="function">
    <text evidence="3 4 6 7 8 9 11">Multifunctional effector that can suppress host BAK1/SERK3-mediated immunity through at least two different pathways (PubMed:19794118, PubMed:20457921, PubMed:21348873, PubMed:26348328). Manipulates plant immunity by targeting and stabilizing host E3 ligase CMPG1. Preventing the normal 26S proteasome-dependent degradation of potato CMPG1, and thus potentially of its protein substrates in the host cell, further abolishes host cell death during the biotrophic phase of infection (PubMed:19794118, PubMed:20457921, PubMed:21348873). Also associates with and affects the function of the dynamin-related protein 2 (DRP2), a plant GTPase involved in immune receptor-mediated endocytosis (PubMed:26348328). The Avr3a(EM) form evades recognition by R3a, thus does not trigger R3a-mediated hypersensitivity and does not suppress INF1-induced cell death (PubMed:15894622, PubMed:16965554, PubMed:19245321).</text>
</comment>
<comment type="subunit">
    <text evidence="8 10 11">Forms homodimers via the RxLR-dEER motif (PubMed:22977236). Interacts with host E3 ligase CMPG1 (PubMed:20457921). Interacts with host DRP2 (PubMed:26348328).</text>
</comment>
<comment type="subcellular location">
    <subcellularLocation>
        <location evidence="3 4 5 14">Secreted</location>
    </subcellularLocation>
    <subcellularLocation>
        <location evidence="3 4 5 14">Host cytoplasm</location>
    </subcellularLocation>
</comment>
<comment type="induction">
    <text evidence="12 14">Expression is induced during host plant infection.</text>
</comment>
<comment type="domain">
    <text evidence="5 10 13">The RxLR-dEER motif is required for the delivery of the effector to the host cell cytoplasm but does not bind phosphatidylinositol monophosphates (PubMed:17914356, PubMed:22977236). The motif is cleaved after the RxLR sequence (PubMed:28522546). The RxLR motif (residues 44 to 47) plays a crucial role in the intracellular processing before secretion (PubMed:28522546). The Glu-rich part localized just after the cleavage site (residues 48 to 59) is required for homodimerization (PubMed:28522546).</text>
</comment>
<comment type="domain">
    <text evidence="1">The conserved, positively charged effector domain (residues 77 to 147), rather than the RXLR domain, is required for binding to phosphatidylinositol monophosphates (PIPs). PIP binding is necessary for accumulation of CMPG1 and Avr3a in host plants.</text>
</comment>
<comment type="PTM">
    <text evidence="13">Proteolytically cleaved. The cleavage site directly after the RxLR sequence and the high conservation among other effector proteins suggest that the RxLR motif might play a crucial role in the intracellular processing before secretion.</text>
</comment>
<comment type="PTM">
    <text evidence="13">glycosylated.</text>
</comment>
<comment type="PTM">
    <text evidence="13">N-acetylated at Lys-48 after cleavage.</text>
</comment>
<comment type="miscellaneous">
    <text evidence="3 4">The AVR3a protein of Phytophthora infestans is a polymorphic member of the RXLR class of cytoplasmic effectors with dual functions. AVR3a(KI) but not AVR3a(EM) activates innate immunity triggered by the potato resistance protein R3a and is a strong suppressor of the cell-death response induced by INF1 elicitin, a secreted P.infestans protein that has features of pathogen-associated molecular patterns. The 2 polymorphic residues between Avr3A(KI) and Avr3a(EM) are localized at positions 80 and 103, respectively.</text>
</comment>
<comment type="similarity">
    <text evidence="19">Belongs to the RxLR effector family.</text>
</comment>
<gene>
    <name evidence="15" type="primary">Avr3a</name>
    <name evidence="17" type="synonym">Avr3a(EM)</name>
    <name evidence="18" type="synonym">Pex147</name>
    <name evidence="18" type="synonym">PexRD7</name>
    <name type="ORF">PI35.0050</name>
    <name type="ORF">PI49.0530</name>
</gene>
<organism>
    <name type="scientific">Phytophthora infestans</name>
    <name type="common">Potato late blight agent</name>
    <name type="synonym">Botrytis infestans</name>
    <dbReference type="NCBI Taxonomy" id="4787"/>
    <lineage>
        <taxon>Eukaryota</taxon>
        <taxon>Sar</taxon>
        <taxon>Stramenopiles</taxon>
        <taxon>Oomycota</taxon>
        <taxon>Peronosporales</taxon>
        <taxon>Peronosporaceae</taxon>
        <taxon>Phytophthora</taxon>
    </lineage>
</organism>
<accession>Q572D3</accession>
<name>A3AEM_PHYIN</name>
<evidence type="ECO:0000250" key="1">
    <source>
        <dbReference type="UniProtKB" id="E2DWQ7"/>
    </source>
</evidence>
<evidence type="ECO:0000255" key="2"/>
<evidence type="ECO:0000269" key="3">
    <source>
    </source>
</evidence>
<evidence type="ECO:0000269" key="4">
    <source>
    </source>
</evidence>
<evidence type="ECO:0000269" key="5">
    <source>
    </source>
</evidence>
<evidence type="ECO:0000269" key="6">
    <source>
    </source>
</evidence>
<evidence type="ECO:0000269" key="7">
    <source>
    </source>
</evidence>
<evidence type="ECO:0000269" key="8">
    <source>
    </source>
</evidence>
<evidence type="ECO:0000269" key="9">
    <source>
    </source>
</evidence>
<evidence type="ECO:0000269" key="10">
    <source>
    </source>
</evidence>
<evidence type="ECO:0000269" key="11">
    <source>
    </source>
</evidence>
<evidence type="ECO:0000269" key="12">
    <source>
    </source>
</evidence>
<evidence type="ECO:0000269" key="13">
    <source>
    </source>
</evidence>
<evidence type="ECO:0000269" key="14">
    <source>
    </source>
</evidence>
<evidence type="ECO:0000303" key="15">
    <source>
    </source>
</evidence>
<evidence type="ECO:0000303" key="16">
    <source>
    </source>
</evidence>
<evidence type="ECO:0000303" key="17">
    <source>
    </source>
</evidence>
<evidence type="ECO:0000303" key="18">
    <source>
    </source>
</evidence>
<evidence type="ECO:0000305" key="19"/>
<evidence type="ECO:0000305" key="20">
    <source>
    </source>
</evidence>
<keyword id="KW-0007">Acetylation</keyword>
<keyword id="KW-0325">Glycoprotein</keyword>
<keyword id="KW-1035">Host cytoplasm</keyword>
<keyword id="KW-0964">Secreted</keyword>
<keyword id="KW-0732">Signal</keyword>
<keyword id="KW-0843">Virulence</keyword>
<feature type="signal peptide" evidence="2">
    <location>
        <begin position="1"/>
        <end position="21"/>
    </location>
</feature>
<feature type="chain" id="PRO_5013531960" description="RxLR effector protein Avr3a">
    <location>
        <begin position="22"/>
        <end position="147"/>
    </location>
</feature>
<feature type="region of interest" description="Effector domain" evidence="1">
    <location>
        <begin position="77"/>
        <end position="147"/>
    </location>
</feature>
<feature type="short sequence motif" description="RxLR-dEER" evidence="20">
    <location>
        <begin position="44"/>
        <end position="59"/>
    </location>
</feature>
<feature type="site" description="Cleavage" evidence="13">
    <location>
        <begin position="47"/>
        <end position="48"/>
    </location>
</feature>
<feature type="modified residue" description="N6-acetyllysine" evidence="13">
    <location>
        <position position="48"/>
    </location>
</feature>
<reference key="1">
    <citation type="journal article" date="2005" name="Proc. Natl. Acad. Sci. U.S.A.">
        <title>An ancestral oomycete locus contains late blight avirulence gene Avr3a, encoding a protein that is recognized in the host cytoplasm.</title>
        <authorList>
            <person name="Armstrong M.R."/>
            <person name="Whisson S.C."/>
            <person name="Pritchard L."/>
            <person name="Bos J.I."/>
            <person name="Venter E."/>
            <person name="Avrova A.O."/>
            <person name="Rehmany A.P."/>
            <person name="Boehme U."/>
            <person name="Brooks K."/>
            <person name="Cherevach I."/>
            <person name="Hamlin N."/>
            <person name="White B."/>
            <person name="Fraser A."/>
            <person name="Lord A."/>
            <person name="Quail M.A."/>
            <person name="Churcher C."/>
            <person name="Hall N."/>
            <person name="Berriman M."/>
            <person name="Huang S."/>
            <person name="Kamoun S."/>
            <person name="Beynon J.L."/>
            <person name="Birch P.R."/>
        </authorList>
    </citation>
    <scope>NUCLEOTIDE SEQUENCE [GENOMIC DNA]</scope>
    <scope>FUNCTION</scope>
    <scope>SUBCELLULAR LOCATION</scope>
</reference>
<reference key="2">
    <citation type="journal article" date="2011" name="BMC Genet.">
        <title>Genetic diversity of Phytophthora infestans in the Northern Andean region.</title>
        <authorList>
            <person name="Cardenas M."/>
            <person name="Grajales A."/>
            <person name="Sierra R."/>
            <person name="Rojas A."/>
            <person name="Gonzalez-Almario A."/>
            <person name="Vargas A."/>
            <person name="Marin M."/>
            <person name="Fermin G."/>
            <person name="Lagos L.E."/>
            <person name="Grunwald N.J."/>
            <person name="Bernal A."/>
            <person name="Salazar C."/>
            <person name="Restrepo S."/>
        </authorList>
    </citation>
    <scope>NUCLEOTIDE SEQUENCE [GENOMIC DNA]</scope>
</reference>
<reference key="3">
    <citation type="journal article" date="2011" name="Plant Dis.">
        <title>First Report of Phytophthora infestans Causing Late Blight on Solanum viarum in Colombia.</title>
        <authorList>
            <person name="Cardenas M.E."/>
            <person name="Medina E."/>
            <person name="Tabima J."/>
            <person name="Vargas A."/>
            <person name="Lopera C."/>
            <person name="Bernal A."/>
            <person name="Restrepo S."/>
        </authorList>
    </citation>
    <scope>NUCLEOTIDE SEQUENCE [GENOMIC DNA]</scope>
    <source>
        <strain>SV1</strain>
    </source>
</reference>
<reference key="4">
    <citation type="journal article" date="2012" name="PPO Spec. Rep.">
        <title>Are simple Phytophthora infestans races really that simple?</title>
        <authorList>
            <person name="Pankin A.A."/>
            <person name="Kinash E.A."/>
            <person name="Kozlovskaya I.N."/>
            <person name="Kuznetsova M.A."/>
            <person name="Khavkin E.E."/>
        </authorList>
    </citation>
    <scope>NUCLEOTIDE SEQUENCE [GENOMIC DNA]</scope>
    <source>
        <strain>Race 1</strain>
        <strain>Race 1.2</strain>
        <strain>Race 1.2.3</strain>
        <strain>Race 1.2.4</strain>
        <strain>Race 1.3</strain>
    </source>
</reference>
<reference key="5">
    <citation type="journal article" date="2013" name="Rev. Iberoam. Micol.">
        <title>Physiological and molecular characterization of Phytophthora infestans isolates from the Central Colombian Andean Region.</title>
        <authorList>
            <person name="Cespedes M.C."/>
            <person name="Cardenas M.E."/>
            <person name="Vargas A.M."/>
            <person name="Rojas A."/>
            <person name="Morales J.G."/>
            <person name="Jimenez P."/>
            <person name="Bernal A.J."/>
            <person name="Restrepo S."/>
        </authorList>
    </citation>
    <scope>NUCLEOTIDE SEQUENCE [GENOMIC DNA]</scope>
    <source>
        <strain>2404</strain>
        <strain>2474</strain>
        <strain>2518</strain>
        <strain>2524</strain>
        <strain>2557</strain>
        <strain>Z3-2</strain>
    </source>
</reference>
<reference key="6">
    <citation type="journal article" date="2014" name="Russ. Agricult. Sci.">
        <title>On molecular identification of Phytophthora infestans genotypes.</title>
        <authorList>
            <person name="Beketova M."/>
            <person name="Sokolova E."/>
            <person name="Malyuchenko O."/>
            <person name="Alekseev Y."/>
            <person name="Kuznetsova M."/>
            <person name="Kozlovsky B."/>
            <person name="Rogozina E."/>
            <person name="Khavkin E."/>
        </authorList>
    </citation>
    <scope>NUCLEOTIDE SEQUENCE [GENOMIC DNA]</scope>
    <source>
        <strain>Race 1</strain>
        <strain>Race 131</strain>
        <strain>Race EKSL 11.12</strain>
    </source>
</reference>
<reference key="7">
    <citation type="journal article" date="2018" name="Evol. Appl.">
        <title>Evidence for intragenic recombination and selective sweep in an effector gene of Phytophthora infestans.</title>
        <authorList>
            <person name="Yang L."/>
            <person name="Ouyang H.B."/>
            <person name="Fang Z.G."/>
            <person name="Zhu W."/>
            <person name="Wu E.J."/>
            <person name="Luo G.H."/>
            <person name="Shang L.P."/>
            <person name="Zhan J."/>
        </authorList>
    </citation>
    <scope>NUCLEOTIDE SEQUENCE [GENOMIC DNA]</scope>
    <source>
        <strain>FJ-F041</strain>
        <strain>GS-Pd11330</strain>
        <strain>GZ-GA007</strain>
        <strain>NX-Pd21418</strain>
    </source>
</reference>
<reference key="8">
    <citation type="submission" date="2018-02" db="EMBL/GenBank/DDBJ databases">
        <title>Diversity of RXLR effector genes in Phytophthora infestans isolates from Egypt.</title>
        <authorList>
            <person name="El-Ganainy S.M."/>
            <person name="Ahmed Y.M."/>
            <person name="Soliman M.S."/>
            <person name="Squires J.N."/>
            <person name="Cooke D.E."/>
        </authorList>
    </citation>
    <scope>NUCLEOTIDE SEQUENCE [GENOMIC DNA]</scope>
    <source>
        <strain>EG-005</strain>
        <strain>EG-006</strain>
        <strain>EG-011</strain>
    </source>
</reference>
<reference key="9">
    <citation type="journal article" date="2006" name="Plant J.">
        <title>The C-terminal half of Phytophthora infestans RXLR effector AVR3a is sufficient to trigger R3a-mediated hypersensitivity and suppress INF1-induced cell death in Nicotiana benthamiana.</title>
        <authorList>
            <person name="Bos J.I."/>
            <person name="Kanneganti T.D."/>
            <person name="Young C."/>
            <person name="Cakir C."/>
            <person name="Huitema E."/>
            <person name="Win J."/>
            <person name="Armstrong M.R."/>
            <person name="Birch P.R."/>
            <person name="Kamoun S."/>
        </authorList>
    </citation>
    <scope>FUNCTION</scope>
</reference>
<reference key="10">
    <citation type="journal article" date="2007" name="Nature">
        <title>A translocation signal for delivery of oomycete effector proteins into host plant cells.</title>
        <authorList>
            <person name="Whisson S.C."/>
            <person name="Boevink P.C."/>
            <person name="Moleleki L."/>
            <person name="Avrova A.O."/>
            <person name="Morales J.G."/>
            <person name="Gilroy E.M."/>
            <person name="Armstrong M.R."/>
            <person name="Grouffaud S."/>
            <person name="van West P."/>
            <person name="Chapman S."/>
            <person name="Hein I."/>
            <person name="Toth I.K."/>
            <person name="Pritchard L."/>
            <person name="Birch P.R."/>
        </authorList>
    </citation>
    <scope>DOMAIN</scope>
    <scope>SUBCELLULAR LOCATION</scope>
</reference>
<reference key="11">
    <citation type="journal article" date="2009" name="Plant Cell">
        <title>In planta expression screens of Phytophthora infestans RXLR effectors reveal diverse phenotypes, including activation of the Solanum bulbocastanum disease resistance protein Rpi-blb2.</title>
        <authorList>
            <person name="Oh S.K."/>
            <person name="Young C."/>
            <person name="Lee M."/>
            <person name="Oliva R."/>
            <person name="Bozkurt T.O."/>
            <person name="Cano L.M."/>
            <person name="Win J."/>
            <person name="Bos J.I."/>
            <person name="Liu H.Y."/>
            <person name="van Damme M."/>
            <person name="Morgan W."/>
            <person name="Choi D."/>
            <person name="Van der Vossen E.A."/>
            <person name="Vleeshouwers V.G."/>
            <person name="Kamoun S."/>
        </authorList>
    </citation>
    <scope>FUNCTION</scope>
</reference>
<reference key="12">
    <citation type="journal article" date="2009" name="Mol. Plant Microbe Interact.">
        <title>Distinct amino acids of the Phytophthora infestans effector AVR3a condition activation of R3a hypersensitivity and suppression of cell death.</title>
        <authorList>
            <person name="Bos J.I."/>
            <person name="Chaparro-Garcia A."/>
            <person name="Quesada-Ocampo L.M."/>
            <person name="McSpadden Gardener B.B."/>
            <person name="Kamoun S."/>
        </authorList>
    </citation>
    <scope>FUNCTION</scope>
</reference>
<reference key="13">
    <citation type="journal article" date="2010" name="Proc. Natl. Acad. Sci. U.S.A.">
        <title>Phytophthora infestans effector AVR3a is essential for virulence and manipulates plant immunity by stabilizing host E3 ligase CMPG1.</title>
        <authorList>
            <person name="Bos J.I."/>
            <person name="Armstrong M.R."/>
            <person name="Gilroy E.M."/>
            <person name="Boevink P.C."/>
            <person name="Hein I."/>
            <person name="Taylor R.M."/>
            <person name="Zhendong T."/>
            <person name="Engelhardt S."/>
            <person name="Vetukuri R.R."/>
            <person name="Harrower B."/>
            <person name="Dixelius C."/>
            <person name="Bryan G."/>
            <person name="Sadanandom A."/>
            <person name="Whisson S.C."/>
            <person name="Kamoun S."/>
            <person name="Birch P.R."/>
        </authorList>
    </citation>
    <scope>FUNCTION</scope>
    <scope>INTERACTION WITH HOST E3 LIGASE CMPG1</scope>
</reference>
<reference key="14">
    <citation type="journal article" date="2011" name="New Phytol.">
        <title>CMPG1-dependent cell death follows perception of diverse pathogen elicitors at the host plasma membrane and is suppressed by Phytophthora infestans RXLR effector AVR3a.</title>
        <authorList>
            <person name="Gilroy E.M."/>
            <person name="Taylor R.M."/>
            <person name="Hein I."/>
            <person name="Boevink P."/>
            <person name="Sadanandom A."/>
            <person name="Birch P.R."/>
        </authorList>
    </citation>
    <scope>FUNCTION</scope>
</reference>
<reference key="15">
    <citation type="journal article" date="2012" name="J. Biol. Chem.">
        <title>Avirulence protein 3a (AVR3a) from the potato pathogen Phytophthora infestans forms homodimers through its predicted translocation region and does not specifically bind phospholipids.</title>
        <authorList>
            <person name="Wawra S."/>
            <person name="Agacan M."/>
            <person name="Boddey J.A."/>
            <person name="Davidson I."/>
            <person name="Gachon C.M."/>
            <person name="Zanda M."/>
            <person name="Grouffaud S."/>
            <person name="Whisson S.C."/>
            <person name="Birch P.R."/>
            <person name="Porter A.J."/>
            <person name="van West P."/>
        </authorList>
    </citation>
    <scope>DOMAIN</scope>
    <scope>SUBUNIT</scope>
</reference>
<reference key="16">
    <citation type="journal article" date="2015" name="PLoS ONE">
        <title>Phytophthora infestans RXLR-WY Effector AVR3a Associates with Dynamin-Related Protein 2 Required for Endocytosis of the Plant Pattern Recognition Receptor FLS2.</title>
        <authorList>
            <person name="Chaparro-Garcia A."/>
            <person name="Schwizer S."/>
            <person name="Sklenar J."/>
            <person name="Yoshida K."/>
            <person name="Petre B."/>
            <person name="Bos J.I."/>
            <person name="Schornack S."/>
            <person name="Jones A.M."/>
            <person name="Bozkurt T.O."/>
            <person name="Kamoun S."/>
        </authorList>
    </citation>
    <scope>FUNCTION</scope>
    <scope>INTERACTION WITH DRP2</scope>
</reference>
<reference key="17">
    <citation type="journal article" date="2017" name="BMC Genomics">
        <title>RNA-seq of life stages of the oomycete Phytophthora infestans reveals dynamic changes in metabolic, signal transduction, and pathogenesis genes and a major role for calcium signaling in development.</title>
        <authorList>
            <person name="Ah-Fong A.M."/>
            <person name="Kim K.S."/>
            <person name="Judelson H.S."/>
        </authorList>
    </citation>
    <scope>INDUCTION</scope>
</reference>
<reference key="18">
    <citation type="journal article" date="2017" name="Plant Cell">
        <title>The RxLR motif of the host targeting effector AVR3a of Phytophthora infestans is cleaved before secretion.</title>
        <authorList>
            <person name="Wawra S."/>
            <person name="Trusch F."/>
            <person name="Matena A."/>
            <person name="Apostolakis K."/>
            <person name="Linne U."/>
            <person name="Zhukov I."/>
            <person name="Stanek J."/>
            <person name="Kozminski W."/>
            <person name="Davidson I."/>
            <person name="Secombes C.J."/>
            <person name="Bayer P."/>
            <person name="van West P."/>
        </authorList>
    </citation>
    <scope>CLEAVAGE</scope>
    <scope>ACETYLATION AT LYS-48</scope>
    <scope>SUBUNIT</scope>
    <scope>GLYCOSYLATION</scope>
</reference>
<reference key="19">
    <citation type="journal article" date="2017" name="Front. Plant Sci.">
        <title>Conserved RXLR effector genes of Phytophthora infestans expressed at the early stage of potato infection are suppressive to host defense.</title>
        <authorList>
            <person name="Yin J."/>
            <person name="Gu B."/>
            <person name="Huang G."/>
            <person name="Tian Y."/>
            <person name="Quan J."/>
            <person name="Lindqvist-Kreuze H."/>
            <person name="Shan W."/>
        </authorList>
    </citation>
    <scope>INDUCTION</scope>
    <scope>SUBCELLULAR LOCATION</scope>
</reference>